<feature type="chain" id="PRO_1000122338" description="Large ribosomal subunit protein bL20">
    <location>
        <begin position="1"/>
        <end position="125"/>
    </location>
</feature>
<keyword id="KW-0687">Ribonucleoprotein</keyword>
<keyword id="KW-0689">Ribosomal protein</keyword>
<keyword id="KW-0694">RNA-binding</keyword>
<keyword id="KW-0699">rRNA-binding</keyword>
<sequence>MARVKRGVTSHAKHKKVLKAAKGYYGRRKNTIRIAKQAVEKGMQYAYRDRKNKKRTFRALWIQRLNAAVREHGLTYSRFIDGLAKSGIVVDRKALSELAIHEPASFAAVVEKAKAALPQNTAKAA</sequence>
<protein>
    <recommendedName>
        <fullName evidence="1">Large ribosomal subunit protein bL20</fullName>
    </recommendedName>
    <alternativeName>
        <fullName evidence="2">50S ribosomal protein L20</fullName>
    </alternativeName>
</protein>
<organism>
    <name type="scientific">Methylobacterium radiotolerans (strain ATCC 27329 / DSM 1819 / JCM 2831 / NBRC 15690 / NCIMB 10815 / 0-1)</name>
    <dbReference type="NCBI Taxonomy" id="426355"/>
    <lineage>
        <taxon>Bacteria</taxon>
        <taxon>Pseudomonadati</taxon>
        <taxon>Pseudomonadota</taxon>
        <taxon>Alphaproteobacteria</taxon>
        <taxon>Hyphomicrobiales</taxon>
        <taxon>Methylobacteriaceae</taxon>
        <taxon>Methylobacterium</taxon>
    </lineage>
</organism>
<accession>B1M6P4</accession>
<gene>
    <name evidence="1" type="primary">rplT</name>
    <name type="ordered locus">Mrad2831_3153</name>
</gene>
<proteinExistence type="inferred from homology"/>
<evidence type="ECO:0000255" key="1">
    <source>
        <dbReference type="HAMAP-Rule" id="MF_00382"/>
    </source>
</evidence>
<evidence type="ECO:0000305" key="2"/>
<reference key="1">
    <citation type="submission" date="2008-03" db="EMBL/GenBank/DDBJ databases">
        <title>Complete sequence of chromosome of Methylobacterium radiotolerans JCM 2831.</title>
        <authorList>
            <consortium name="US DOE Joint Genome Institute"/>
            <person name="Copeland A."/>
            <person name="Lucas S."/>
            <person name="Lapidus A."/>
            <person name="Glavina del Rio T."/>
            <person name="Dalin E."/>
            <person name="Tice H."/>
            <person name="Bruce D."/>
            <person name="Goodwin L."/>
            <person name="Pitluck S."/>
            <person name="Kiss H."/>
            <person name="Brettin T."/>
            <person name="Detter J.C."/>
            <person name="Han C."/>
            <person name="Kuske C.R."/>
            <person name="Schmutz J."/>
            <person name="Larimer F."/>
            <person name="Land M."/>
            <person name="Hauser L."/>
            <person name="Kyrpides N."/>
            <person name="Mikhailova N."/>
            <person name="Marx C.J."/>
            <person name="Richardson P."/>
        </authorList>
    </citation>
    <scope>NUCLEOTIDE SEQUENCE [LARGE SCALE GENOMIC DNA]</scope>
    <source>
        <strain>ATCC 27329 / DSM 1819 / JCM 2831 / NBRC 15690 / NCIMB 10815 / 0-1</strain>
    </source>
</reference>
<comment type="function">
    <text evidence="1">Binds directly to 23S ribosomal RNA and is necessary for the in vitro assembly process of the 50S ribosomal subunit. It is not involved in the protein synthesizing functions of that subunit.</text>
</comment>
<comment type="similarity">
    <text evidence="1">Belongs to the bacterial ribosomal protein bL20 family.</text>
</comment>
<name>RL20_METRJ</name>
<dbReference type="EMBL" id="CP001001">
    <property type="protein sequence ID" value="ACB25135.1"/>
    <property type="molecule type" value="Genomic_DNA"/>
</dbReference>
<dbReference type="RefSeq" id="WP_012320099.1">
    <property type="nucleotide sequence ID" value="NC_010505.1"/>
</dbReference>
<dbReference type="SMR" id="B1M6P4"/>
<dbReference type="STRING" id="426355.Mrad2831_3153"/>
<dbReference type="GeneID" id="6139200"/>
<dbReference type="KEGG" id="mrd:Mrad2831_3153"/>
<dbReference type="eggNOG" id="COG0292">
    <property type="taxonomic scope" value="Bacteria"/>
</dbReference>
<dbReference type="HOGENOM" id="CLU_123265_0_1_5"/>
<dbReference type="OrthoDB" id="9808966at2"/>
<dbReference type="Proteomes" id="UP000006589">
    <property type="component" value="Chromosome"/>
</dbReference>
<dbReference type="GO" id="GO:1990904">
    <property type="term" value="C:ribonucleoprotein complex"/>
    <property type="evidence" value="ECO:0007669"/>
    <property type="project" value="UniProtKB-KW"/>
</dbReference>
<dbReference type="GO" id="GO:0005840">
    <property type="term" value="C:ribosome"/>
    <property type="evidence" value="ECO:0007669"/>
    <property type="project" value="UniProtKB-KW"/>
</dbReference>
<dbReference type="GO" id="GO:0019843">
    <property type="term" value="F:rRNA binding"/>
    <property type="evidence" value="ECO:0007669"/>
    <property type="project" value="UniProtKB-UniRule"/>
</dbReference>
<dbReference type="GO" id="GO:0003735">
    <property type="term" value="F:structural constituent of ribosome"/>
    <property type="evidence" value="ECO:0007669"/>
    <property type="project" value="InterPro"/>
</dbReference>
<dbReference type="GO" id="GO:0000027">
    <property type="term" value="P:ribosomal large subunit assembly"/>
    <property type="evidence" value="ECO:0007669"/>
    <property type="project" value="UniProtKB-UniRule"/>
</dbReference>
<dbReference type="GO" id="GO:0006412">
    <property type="term" value="P:translation"/>
    <property type="evidence" value="ECO:0007669"/>
    <property type="project" value="InterPro"/>
</dbReference>
<dbReference type="CDD" id="cd07026">
    <property type="entry name" value="Ribosomal_L20"/>
    <property type="match status" value="1"/>
</dbReference>
<dbReference type="FunFam" id="1.10.1900.20:FF:000001">
    <property type="entry name" value="50S ribosomal protein L20"/>
    <property type="match status" value="1"/>
</dbReference>
<dbReference type="Gene3D" id="6.10.160.10">
    <property type="match status" value="1"/>
</dbReference>
<dbReference type="Gene3D" id="1.10.1900.20">
    <property type="entry name" value="Ribosomal protein L20"/>
    <property type="match status" value="1"/>
</dbReference>
<dbReference type="HAMAP" id="MF_00382">
    <property type="entry name" value="Ribosomal_bL20"/>
    <property type="match status" value="1"/>
</dbReference>
<dbReference type="InterPro" id="IPR005813">
    <property type="entry name" value="Ribosomal_bL20"/>
</dbReference>
<dbReference type="InterPro" id="IPR049946">
    <property type="entry name" value="RIBOSOMAL_L20_CS"/>
</dbReference>
<dbReference type="InterPro" id="IPR035566">
    <property type="entry name" value="Ribosomal_protein_bL20_C"/>
</dbReference>
<dbReference type="NCBIfam" id="TIGR01032">
    <property type="entry name" value="rplT_bact"/>
    <property type="match status" value="1"/>
</dbReference>
<dbReference type="PANTHER" id="PTHR10986">
    <property type="entry name" value="39S RIBOSOMAL PROTEIN L20"/>
    <property type="match status" value="1"/>
</dbReference>
<dbReference type="Pfam" id="PF00453">
    <property type="entry name" value="Ribosomal_L20"/>
    <property type="match status" value="1"/>
</dbReference>
<dbReference type="PRINTS" id="PR00062">
    <property type="entry name" value="RIBOSOMALL20"/>
</dbReference>
<dbReference type="SUPFAM" id="SSF74731">
    <property type="entry name" value="Ribosomal protein L20"/>
    <property type="match status" value="1"/>
</dbReference>
<dbReference type="PROSITE" id="PS00937">
    <property type="entry name" value="RIBOSOMAL_L20"/>
    <property type="match status" value="1"/>
</dbReference>